<evidence type="ECO:0000250" key="1"/>
<evidence type="ECO:0000255" key="2">
    <source>
        <dbReference type="PROSITE-ProRule" id="PRU10013"/>
    </source>
</evidence>
<evidence type="ECO:0000256" key="3">
    <source>
        <dbReference type="SAM" id="MobiDB-lite"/>
    </source>
</evidence>
<evidence type="ECO:0000305" key="4"/>
<name>CATE_ALKPO</name>
<keyword id="KW-0963">Cytoplasm</keyword>
<keyword id="KW-0349">Heme</keyword>
<keyword id="KW-0376">Hydrogen peroxide</keyword>
<keyword id="KW-0408">Iron</keyword>
<keyword id="KW-0479">Metal-binding</keyword>
<keyword id="KW-0560">Oxidoreductase</keyword>
<keyword id="KW-0575">Peroxidase</keyword>
<keyword id="KW-1185">Reference proteome</keyword>
<gene>
    <name type="primary">katE</name>
    <name type="synonym">katA</name>
    <name type="ordered locus">BpOF4_07610</name>
</gene>
<reference key="1">
    <citation type="journal article" date="2011" name="Environ. Microbiol.">
        <title>Genome of alkaliphilic Bacillus pseudofirmus OF4 reveals adaptations that support the ability to grow in an external pH range from 7.5 to 11.4.</title>
        <authorList>
            <person name="Janto B."/>
            <person name="Ahmed A."/>
            <person name="Ito M."/>
            <person name="Liu J."/>
            <person name="Hicks D.B."/>
            <person name="Pagni S."/>
            <person name="Fackelmayer O.J."/>
            <person name="Smith T.A."/>
            <person name="Earl J."/>
            <person name="Elbourne L.D."/>
            <person name="Hassan K."/>
            <person name="Paulsen I.T."/>
            <person name="Kolsto A.B."/>
            <person name="Tourasse N.J."/>
            <person name="Ehrlich G.D."/>
            <person name="Boissy R."/>
            <person name="Ivey D.M."/>
            <person name="Li G."/>
            <person name="Xue Y."/>
            <person name="Ma Y."/>
            <person name="Hu F.Z."/>
            <person name="Krulwich T.A."/>
        </authorList>
    </citation>
    <scope>NUCLEOTIDE SEQUENCE [LARGE SCALE GENOMIC DNA]</scope>
    <source>
        <strain>ATCC BAA-2126 / JCM 17055 / OF4</strain>
    </source>
</reference>
<reference key="2">
    <citation type="submission" date="1991-10" db="EMBL/GenBank/DDBJ databases">
        <authorList>
            <person name="Quirk P.G."/>
            <person name="Krulwich T.A."/>
        </authorList>
    </citation>
    <scope>NUCLEOTIDE SEQUENCE [GENOMIC DNA] OF 1-448</scope>
</reference>
<protein>
    <recommendedName>
        <fullName>Catalase</fullName>
        <ecNumber>1.11.1.6</ecNumber>
    </recommendedName>
</protein>
<accession>P30266</accession>
<accession>D3FQA8</accession>
<feature type="chain" id="PRO_0000084969" description="Catalase">
    <location>
        <begin position="1"/>
        <end position="678"/>
    </location>
</feature>
<feature type="region of interest" description="Disordered" evidence="3">
    <location>
        <begin position="1"/>
        <end position="32"/>
    </location>
</feature>
<feature type="compositionally biased region" description="Basic and acidic residues" evidence="3">
    <location>
        <begin position="1"/>
        <end position="26"/>
    </location>
</feature>
<feature type="active site" evidence="2">
    <location>
        <position position="75"/>
    </location>
</feature>
<feature type="active site" evidence="2">
    <location>
        <position position="148"/>
    </location>
</feature>
<feature type="binding site" description="axial binding residue" evidence="1">
    <location>
        <position position="362"/>
    </location>
    <ligand>
        <name>heme</name>
        <dbReference type="ChEBI" id="CHEBI:30413"/>
    </ligand>
    <ligandPart>
        <name>Fe</name>
        <dbReference type="ChEBI" id="CHEBI:18248"/>
    </ligandPart>
</feature>
<dbReference type="EC" id="1.11.1.6"/>
<dbReference type="EMBL" id="CP001878">
    <property type="protein sequence ID" value="ADC49580.1"/>
    <property type="molecule type" value="Genomic_DNA"/>
</dbReference>
<dbReference type="EMBL" id="AH000868">
    <property type="protein sequence ID" value="AAA22558.1"/>
    <property type="molecule type" value="Genomic_DNA"/>
</dbReference>
<dbReference type="PIR" id="S27490">
    <property type="entry name" value="S27490"/>
</dbReference>
<dbReference type="RefSeq" id="WP_012960851.1">
    <property type="nucleotide sequence ID" value="NC_013791.2"/>
</dbReference>
<dbReference type="SMR" id="P30266"/>
<dbReference type="STRING" id="398511.BpOF4_07610"/>
<dbReference type="KEGG" id="bpf:BpOF4_07610"/>
<dbReference type="eggNOG" id="COG0753">
    <property type="taxonomic scope" value="Bacteria"/>
</dbReference>
<dbReference type="HOGENOM" id="CLU_010645_3_0_9"/>
<dbReference type="Proteomes" id="UP000001544">
    <property type="component" value="Chromosome"/>
</dbReference>
<dbReference type="GO" id="GO:0005829">
    <property type="term" value="C:cytosol"/>
    <property type="evidence" value="ECO:0007669"/>
    <property type="project" value="TreeGrafter"/>
</dbReference>
<dbReference type="GO" id="GO:0004096">
    <property type="term" value="F:catalase activity"/>
    <property type="evidence" value="ECO:0007669"/>
    <property type="project" value="UniProtKB-EC"/>
</dbReference>
<dbReference type="GO" id="GO:0020037">
    <property type="term" value="F:heme binding"/>
    <property type="evidence" value="ECO:0007669"/>
    <property type="project" value="InterPro"/>
</dbReference>
<dbReference type="GO" id="GO:0046872">
    <property type="term" value="F:metal ion binding"/>
    <property type="evidence" value="ECO:0007669"/>
    <property type="project" value="UniProtKB-KW"/>
</dbReference>
<dbReference type="GO" id="GO:0042744">
    <property type="term" value="P:hydrogen peroxide catabolic process"/>
    <property type="evidence" value="ECO:0007669"/>
    <property type="project" value="UniProtKB-KW"/>
</dbReference>
<dbReference type="GO" id="GO:0006979">
    <property type="term" value="P:response to oxidative stress"/>
    <property type="evidence" value="ECO:0007669"/>
    <property type="project" value="InterPro"/>
</dbReference>
<dbReference type="CDD" id="cd08155">
    <property type="entry name" value="catalase_clade_2"/>
    <property type="match status" value="1"/>
</dbReference>
<dbReference type="CDD" id="cd03132">
    <property type="entry name" value="GATase1_catalase"/>
    <property type="match status" value="1"/>
</dbReference>
<dbReference type="FunFam" id="2.40.180.10:FF:000003">
    <property type="entry name" value="Catalase"/>
    <property type="match status" value="1"/>
</dbReference>
<dbReference type="Gene3D" id="1.20.1370.20">
    <property type="match status" value="1"/>
</dbReference>
<dbReference type="Gene3D" id="3.40.50.880">
    <property type="match status" value="1"/>
</dbReference>
<dbReference type="Gene3D" id="2.40.180.10">
    <property type="entry name" value="Catalase core domain"/>
    <property type="match status" value="1"/>
</dbReference>
<dbReference type="InterPro" id="IPR018028">
    <property type="entry name" value="Catalase"/>
</dbReference>
<dbReference type="InterPro" id="IPR024708">
    <property type="entry name" value="Catalase_AS"/>
</dbReference>
<dbReference type="InterPro" id="IPR024712">
    <property type="entry name" value="Catalase_clade2"/>
</dbReference>
<dbReference type="InterPro" id="IPR043156">
    <property type="entry name" value="Catalase_clade2_helical"/>
</dbReference>
<dbReference type="InterPro" id="IPR011614">
    <property type="entry name" value="Catalase_core"/>
</dbReference>
<dbReference type="InterPro" id="IPR002226">
    <property type="entry name" value="Catalase_haem_BS"/>
</dbReference>
<dbReference type="InterPro" id="IPR010582">
    <property type="entry name" value="Catalase_immune_responsive"/>
</dbReference>
<dbReference type="InterPro" id="IPR041399">
    <property type="entry name" value="Catalase_large_C"/>
</dbReference>
<dbReference type="InterPro" id="IPR020835">
    <property type="entry name" value="Catalase_sf"/>
</dbReference>
<dbReference type="InterPro" id="IPR029062">
    <property type="entry name" value="Class_I_gatase-like"/>
</dbReference>
<dbReference type="PANTHER" id="PTHR42821">
    <property type="entry name" value="CATALASE"/>
    <property type="match status" value="1"/>
</dbReference>
<dbReference type="PANTHER" id="PTHR42821:SF1">
    <property type="entry name" value="CATALASE-B"/>
    <property type="match status" value="1"/>
</dbReference>
<dbReference type="Pfam" id="PF00199">
    <property type="entry name" value="Catalase"/>
    <property type="match status" value="1"/>
</dbReference>
<dbReference type="Pfam" id="PF06628">
    <property type="entry name" value="Catalase-rel"/>
    <property type="match status" value="1"/>
</dbReference>
<dbReference type="Pfam" id="PF18011">
    <property type="entry name" value="Catalase_C"/>
    <property type="match status" value="1"/>
</dbReference>
<dbReference type="PIRSF" id="PIRSF038927">
    <property type="entry name" value="Catalase_clade2"/>
    <property type="match status" value="1"/>
</dbReference>
<dbReference type="PRINTS" id="PR00067">
    <property type="entry name" value="CATALASE"/>
</dbReference>
<dbReference type="SMART" id="SM01060">
    <property type="entry name" value="Catalase"/>
    <property type="match status" value="1"/>
</dbReference>
<dbReference type="SUPFAM" id="SSF52317">
    <property type="entry name" value="Class I glutamine amidotransferase-like"/>
    <property type="match status" value="1"/>
</dbReference>
<dbReference type="SUPFAM" id="SSF56634">
    <property type="entry name" value="Heme-dependent catalase-like"/>
    <property type="match status" value="1"/>
</dbReference>
<dbReference type="PROSITE" id="PS00437">
    <property type="entry name" value="CATALASE_1"/>
    <property type="match status" value="1"/>
</dbReference>
<dbReference type="PROSITE" id="PS00438">
    <property type="entry name" value="CATALASE_2"/>
    <property type="match status" value="1"/>
</dbReference>
<dbReference type="PROSITE" id="PS51402">
    <property type="entry name" value="CATALASE_3"/>
    <property type="match status" value="1"/>
</dbReference>
<comment type="function">
    <text>Decomposes hydrogen peroxide into water and oxygen; serves to protect cells from the toxic effects of hydrogen peroxide.</text>
</comment>
<comment type="catalytic activity">
    <reaction evidence="2">
        <text>2 H2O2 = O2 + 2 H2O</text>
        <dbReference type="Rhea" id="RHEA:20309"/>
        <dbReference type="ChEBI" id="CHEBI:15377"/>
        <dbReference type="ChEBI" id="CHEBI:15379"/>
        <dbReference type="ChEBI" id="CHEBI:16240"/>
        <dbReference type="EC" id="1.11.1.6"/>
    </reaction>
</comment>
<comment type="cofactor">
    <cofactor>
        <name>heme</name>
        <dbReference type="ChEBI" id="CHEBI:30413"/>
    </cofactor>
</comment>
<comment type="subcellular location">
    <subcellularLocation>
        <location evidence="4">Cytoplasm</location>
    </subcellularLocation>
</comment>
<comment type="similarity">
    <text evidence="4">Belongs to the catalase family. HPII subfamily.</text>
</comment>
<organism>
    <name type="scientific">Alkalihalophilus pseudofirmus (strain ATCC BAA-2126 / JCM 17055 / OF4)</name>
    <name type="common">Bacillus pseudofirmus</name>
    <dbReference type="NCBI Taxonomy" id="398511"/>
    <lineage>
        <taxon>Bacteria</taxon>
        <taxon>Bacillati</taxon>
        <taxon>Bacillota</taxon>
        <taxon>Bacilli</taxon>
        <taxon>Bacillales</taxon>
        <taxon>Bacillaceae</taxon>
        <taxon>Alkalihalophilus</taxon>
    </lineage>
</organism>
<sequence length="678" mass="77067">MSNEREMQNKKDQQLESFRVEDEGKKLTTNQGLKVSEDEFSLKAGERGPTLMEDFHFREKMTHFDHERIPERIVHARGFAAHGEFQVYDSMKEFTKAKFLQDPSVKTPVFVRFSTVAGSKGSAETVRDARGFATKFYTEEGNYDLVGNNIPVFFIQDAIKFPDLVHALKPEPHNEIPQAQSAHDTFWDFIANNQESAHMVMWAMSDRSIPRSFRMMEGFGVHTFRFVNEEGKAHFVKFHWKPVLGIHSLVWDEAQKIAGKDPDFHRRDLWESIENGDYPEYELGVQLISEEDEFNFDFDVLDPTKIWPEEEVPVKIIGKMTLNRNVDNVFAETEQVAFHPGHVVPGIDFTNDPLLQGRLFSYTDTQLIRLGGPNFHELPINRPVCPFHNNQRDGYGRQTINKGQVSYHKNSLAANTPQPASEEEGGYAHYQEKVEGRKVRKRSESFKDHFSQAKLFWNSMSEVEKNHIIEAFSFELGKVQSKSVQQQVVEMFAHVTSDLAKPVAEAIGANLPQSEGSSVTKSSLALSQENTIKKPDTRKVGVIIDNGFNGDEVKQVLNELQSKGIQAEFISDKLGIKKCAGGSEIEIDHTFLTGESVLFDALYVVGGKEVDPSFKDDAVYFIKEAYAHFKPIGATHVGIKWLEEQEIVEKEGVVTGTDMNIFSQNLTGAVMEHRHWNR</sequence>
<proteinExistence type="inferred from homology"/>